<keyword id="KW-0456">Lyase</keyword>
<keyword id="KW-0614">Plasmid</keyword>
<keyword id="KW-1185">Reference proteome</keyword>
<keyword id="KW-0964">Secreted</keyword>
<keyword id="KW-0843">Virulence</keyword>
<reference key="1">
    <citation type="journal article" date="2005" name="Nucleic Acids Res.">
        <title>Genome dynamics and diversity of Shigella species, the etiologic agents of bacillary dysentery.</title>
        <authorList>
            <person name="Yang F."/>
            <person name="Yang J."/>
            <person name="Zhang X."/>
            <person name="Chen L."/>
            <person name="Jiang Y."/>
            <person name="Yan Y."/>
            <person name="Tang X."/>
            <person name="Wang J."/>
            <person name="Xiong Z."/>
            <person name="Dong J."/>
            <person name="Xue Y."/>
            <person name="Zhu Y."/>
            <person name="Xu X."/>
            <person name="Sun L."/>
            <person name="Chen S."/>
            <person name="Nie H."/>
            <person name="Peng J."/>
            <person name="Xu J."/>
            <person name="Wang Y."/>
            <person name="Yuan Z."/>
            <person name="Wen Y."/>
            <person name="Yao Z."/>
            <person name="Shen Y."/>
            <person name="Qiang B."/>
            <person name="Hou Y."/>
            <person name="Yu J."/>
            <person name="Jin Q."/>
        </authorList>
    </citation>
    <scope>NUCLEOTIDE SEQUENCE [LARGE SCALE GENOMIC DNA]</scope>
    <source>
        <strain>Ss046</strain>
    </source>
</reference>
<reference key="2">
    <citation type="journal article" date="2005" name="Plasmid">
        <title>The complete sequence and analysis of the large virulence plasmid pSS of Shigella sonnei.</title>
        <authorList>
            <person name="Jiang Y."/>
            <person name="Yang F."/>
            <person name="Zhang X."/>
            <person name="Yang J."/>
            <person name="Chen L."/>
            <person name="Yan Y."/>
            <person name="Nie H."/>
            <person name="Xiong Z."/>
            <person name="Wang J."/>
            <person name="Dong J."/>
            <person name="Xue Y."/>
            <person name="Xu X."/>
            <person name="Zhu Y."/>
            <person name="Chen S."/>
            <person name="Jin Q."/>
        </authorList>
    </citation>
    <scope>NUCLEOTIDE SEQUENCE [LARGE SCALE GENOMIC DNA]</scope>
    <source>
        <strain>Ss046</strain>
    </source>
</reference>
<name>OSPF_SHISS</name>
<organism>
    <name type="scientific">Shigella sonnei (strain Ss046)</name>
    <dbReference type="NCBI Taxonomy" id="300269"/>
    <lineage>
        <taxon>Bacteria</taxon>
        <taxon>Pseudomonadati</taxon>
        <taxon>Pseudomonadota</taxon>
        <taxon>Gammaproteobacteria</taxon>
        <taxon>Enterobacterales</taxon>
        <taxon>Enterobacteriaceae</taxon>
        <taxon>Shigella</taxon>
    </lineage>
</organism>
<geneLocation type="plasmid">
    <name>pSS_046</name>
</geneLocation>
<feature type="chain" id="PRO_0000299355" description="Phosphothreonine lyase OspF">
    <location>
        <begin position="1"/>
        <end position="239"/>
    </location>
</feature>
<feature type="active site" description="Proton donor" evidence="1">
    <location>
        <position position="104"/>
    </location>
</feature>
<feature type="active site" description="Proton acceptor" evidence="1">
    <location>
        <position position="134"/>
    </location>
</feature>
<gene>
    <name type="primary">ospF</name>
    <name type="synonym">mkaD</name>
    <name type="ordered locus">SSON_P009</name>
</gene>
<sequence>MPIKKPCLKLNLDSLNVVRSEIPQMLSANERLKNNFNILYNQIRQYPAYYFKVASNVPNYSDICQFFSVMYQGFQIVNHSGDVFIHACRENPQSKGDFVGDKFHISIAREQVPLAFQILSGLLFSEDSPIDKWKITDMNRVSQQSRVGIGAQFTLYVKSDQECSQYSALLLHKIRQFIMCLESNLLRSKIAPGEYPASDVRPEDWKYVSYRNELRSDRDGSERQEQMLREEPFYRLMIE</sequence>
<comment type="function">
    <text evidence="1">Catalyzes the removal of the phosphate group from the phosphothreonine in the mitogen-activated protein kinases such as MAPK2/ERK2, MAPK3/ERK1, MAPK8 and MAPK14 in an irreversible reaction, thus preventing the downstream phosphorylation of histone H3. This epigenetic modification results in inhibition of the transcription of a specific subset of pro-inflammatory genes, and ultimately to a reduced immune response against the invading pathogen. The diminished immune response enhances the bacterium's ability to disseminate and multiply within the host (By similarity).</text>
</comment>
<comment type="subcellular location">
    <subcellularLocation>
        <location>Secreted</location>
    </subcellularLocation>
    <text evidence="1">Secreted via the type III secretion system (T3SS). Localizes in the nucleus of the infected cell (By similarity).</text>
</comment>
<comment type="similarity">
    <text evidence="2">Belongs to the phosphothreonine lyase family.</text>
</comment>
<protein>
    <recommendedName>
        <fullName>Phosphothreonine lyase OspF</fullName>
        <ecNumber>4.2.3.-</ecNumber>
    </recommendedName>
    <alternativeName>
        <fullName>Effector protein OspF</fullName>
    </alternativeName>
</protein>
<dbReference type="EC" id="4.2.3.-"/>
<dbReference type="EMBL" id="CP000039">
    <property type="protein sequence ID" value="AAZ91029.1"/>
    <property type="molecule type" value="Genomic_DNA"/>
</dbReference>
<dbReference type="RefSeq" id="WP_001121863.1">
    <property type="nucleotide sequence ID" value="NC_007385.1"/>
</dbReference>
<dbReference type="SMR" id="Q3YTY3"/>
<dbReference type="KEGG" id="ssn:SSON_P009"/>
<dbReference type="HOGENOM" id="CLU_100525_0_0_6"/>
<dbReference type="Proteomes" id="UP000002529">
    <property type="component" value="Plasmid pSS_046"/>
</dbReference>
<dbReference type="GO" id="GO:0005576">
    <property type="term" value="C:extracellular region"/>
    <property type="evidence" value="ECO:0007669"/>
    <property type="project" value="UniProtKB-SubCell"/>
</dbReference>
<dbReference type="GO" id="GO:0016829">
    <property type="term" value="F:lyase activity"/>
    <property type="evidence" value="ECO:0007669"/>
    <property type="project" value="UniProtKB-KW"/>
</dbReference>
<dbReference type="Gene3D" id="3.30.2430.10">
    <property type="entry name" value="phosphothreonine lyase"/>
    <property type="match status" value="1"/>
</dbReference>
<dbReference type="InterPro" id="IPR003519">
    <property type="entry name" value="OspF/SpvC"/>
</dbReference>
<dbReference type="InterPro" id="IPR038498">
    <property type="entry name" value="OspF/SpvC_sf"/>
</dbReference>
<dbReference type="NCBIfam" id="NF011781">
    <property type="entry name" value="PRK15245.1"/>
    <property type="match status" value="1"/>
</dbReference>
<dbReference type="Pfam" id="PF03536">
    <property type="entry name" value="VRP3"/>
    <property type="match status" value="1"/>
</dbReference>
<dbReference type="PRINTS" id="PR01342">
    <property type="entry name" value="SALVRPPROT"/>
</dbReference>
<proteinExistence type="inferred from homology"/>
<accession>Q3YTY3</accession>
<evidence type="ECO:0000250" key="1"/>
<evidence type="ECO:0000305" key="2"/>